<keyword id="KW-0903">Direct protein sequencing</keyword>
<keyword id="KW-1185">Reference proteome</keyword>
<keyword id="KW-0964">Secreted</keyword>
<dbReference type="Proteomes" id="UP000515204">
    <property type="component" value="Unplaced"/>
</dbReference>
<dbReference type="GO" id="GO:0005576">
    <property type="term" value="C:extracellular region"/>
    <property type="evidence" value="ECO:0007669"/>
    <property type="project" value="UniProtKB-SubCell"/>
</dbReference>
<organism>
    <name type="scientific">Dinoponera quadriceps</name>
    <name type="common">South American ant</name>
    <dbReference type="NCBI Taxonomy" id="609295"/>
    <lineage>
        <taxon>Eukaryota</taxon>
        <taxon>Metazoa</taxon>
        <taxon>Ecdysozoa</taxon>
        <taxon>Arthropoda</taxon>
        <taxon>Hexapoda</taxon>
        <taxon>Insecta</taxon>
        <taxon>Pterygota</taxon>
        <taxon>Neoptera</taxon>
        <taxon>Endopterygota</taxon>
        <taxon>Hymenoptera</taxon>
        <taxon>Apocrita</taxon>
        <taxon>Aculeata</taxon>
        <taxon>Formicoidea</taxon>
        <taxon>Formicidae</taxon>
        <taxon>Ponerinae</taxon>
        <taxon>Ponerini</taxon>
        <taxon>Dinoponera</taxon>
    </lineage>
</organism>
<comment type="function">
    <text evidence="1">The synthetic peptide has no antimicrobial activity against strains of Gram-positive or Gram-negative bacteria, or against yeasts and other fungi.</text>
</comment>
<comment type="subcellular location">
    <subcellularLocation>
        <location evidence="1">Secreted</location>
    </subcellularLocation>
</comment>
<comment type="tissue specificity">
    <text evidence="5">Expressed by the venom gland.</text>
</comment>
<comment type="mass spectrometry"/>
<name>TX1C_DINQU</name>
<reference key="1">
    <citation type="journal article" date="2013" name="J. Proteomics">
        <title>Peptidomic comparison and characterization of the major components of the venom of the giant ant Dinoponera quadriceps collected in four different areas of Brazil.</title>
        <authorList>
            <person name="Cologna C.T."/>
            <person name="Cardoso Jdos S."/>
            <person name="Jourdan E."/>
            <person name="Degueldre M."/>
            <person name="Upert G."/>
            <person name="Gilles N."/>
            <person name="Uetanabaro A.P."/>
            <person name="Costa Neto E.M."/>
            <person name="Thonart P."/>
            <person name="de Pauw E."/>
            <person name="Quinton L."/>
        </authorList>
    </citation>
    <scope>PROTEIN SEQUENCE</scope>
    <scope>ABSENCE OF ANTIMICROBIAL FUNCTION</scope>
    <scope>SUBCELLULAR LOCATION</scope>
    <scope>MASS SPECTROMETRY</scope>
    <scope>SYNTHESIS</scope>
    <source>
        <tissue>Venom</tissue>
    </source>
</reference>
<reference key="2">
    <citation type="journal article" date="2016" name="Toxins">
        <title>The biochemical toxin arsenal from ant venoms.</title>
        <authorList>
            <person name="Touchard A."/>
            <person name="Aili S.R."/>
            <person name="Fox E.G."/>
            <person name="Escoubas P."/>
            <person name="Orivel J."/>
            <person name="Nicholson G.M."/>
            <person name="Dejean A."/>
        </authorList>
    </citation>
    <scope>REVIEW</scope>
    <scope>NOMENCLATURE</scope>
</reference>
<evidence type="ECO:0000269" key="1">
    <source>
    </source>
</evidence>
<evidence type="ECO:0000303" key="2">
    <source>
    </source>
</evidence>
<evidence type="ECO:0000303" key="3">
    <source>
    </source>
</evidence>
<evidence type="ECO:0000305" key="4"/>
<evidence type="ECO:0000305" key="5">
    <source>
    </source>
</evidence>
<proteinExistence type="evidence at protein level"/>
<accession>C0HJK1</accession>
<protein>
    <recommendedName>
        <fullName evidence="3">U1-poneritoxin-Dq1c</fullName>
        <shortName evidence="3">U1-PONTX-Dq1c</shortName>
    </recommendedName>
    <alternativeName>
        <fullName evidence="2">Peptide Dq-1030</fullName>
    </alternativeName>
    <alternativeName>
        <fullName evidence="4">Poneratoxin</fullName>
    </alternativeName>
</protein>
<sequence>LRPDDLSDT</sequence>
<feature type="peptide" id="PRO_0000430026" description="U1-poneritoxin-Dq1c" evidence="1">
    <location>
        <begin position="1"/>
        <end position="9"/>
    </location>
</feature>
<feature type="unsure residue" description="L or I" evidence="1">
    <location>
        <position position="1"/>
    </location>
</feature>
<feature type="unsure residue" description="L or I" evidence="1">
    <location>
        <position position="6"/>
    </location>
</feature>